<comment type="catalytic activity">
    <reaction evidence="1">
        <text>(S)-4-amino-5-oxopentanoate = 5-aminolevulinate</text>
        <dbReference type="Rhea" id="RHEA:14265"/>
        <dbReference type="ChEBI" id="CHEBI:57501"/>
        <dbReference type="ChEBI" id="CHEBI:356416"/>
        <dbReference type="EC" id="5.4.3.8"/>
    </reaction>
</comment>
<comment type="cofactor">
    <cofactor evidence="1">
        <name>pyridoxal 5'-phosphate</name>
        <dbReference type="ChEBI" id="CHEBI:597326"/>
    </cofactor>
</comment>
<comment type="pathway">
    <text evidence="1">Porphyrin-containing compound metabolism; protoporphyrin-IX biosynthesis; 5-aminolevulinate from L-glutamyl-tRNA(Glu): step 2/2.</text>
</comment>
<comment type="subunit">
    <text evidence="1">Homodimer.</text>
</comment>
<comment type="subcellular location">
    <subcellularLocation>
        <location evidence="1">Cytoplasm</location>
    </subcellularLocation>
</comment>
<comment type="similarity">
    <text evidence="1">Belongs to the class-III pyridoxal-phosphate-dependent aminotransferase family. HemL subfamily.</text>
</comment>
<reference key="1">
    <citation type="journal article" date="2005" name="Proc. Natl. Acad. Sci. U.S.A.">
        <title>Whole genome sequence of Staphylococcus saprophyticus reveals the pathogenesis of uncomplicated urinary tract infection.</title>
        <authorList>
            <person name="Kuroda M."/>
            <person name="Yamashita A."/>
            <person name="Hirakawa H."/>
            <person name="Kumano M."/>
            <person name="Morikawa K."/>
            <person name="Higashide M."/>
            <person name="Maruyama A."/>
            <person name="Inose Y."/>
            <person name="Matoba K."/>
            <person name="Toh H."/>
            <person name="Kuhara S."/>
            <person name="Hattori M."/>
            <person name="Ohta T."/>
        </authorList>
    </citation>
    <scope>NUCLEOTIDE SEQUENCE [LARGE SCALE GENOMIC DNA]</scope>
    <source>
        <strain>ATCC 15305 / DSM 20229 / NCIMB 8711 / NCTC 7292 / S-41</strain>
    </source>
</reference>
<accession>Q49Y99</accession>
<keyword id="KW-0963">Cytoplasm</keyword>
<keyword id="KW-0413">Isomerase</keyword>
<keyword id="KW-0627">Porphyrin biosynthesis</keyword>
<keyword id="KW-0663">Pyridoxal phosphate</keyword>
<keyword id="KW-1185">Reference proteome</keyword>
<organism>
    <name type="scientific">Staphylococcus saprophyticus subsp. saprophyticus (strain ATCC 15305 / DSM 20229 / NCIMB 8711 / NCTC 7292 / S-41)</name>
    <dbReference type="NCBI Taxonomy" id="342451"/>
    <lineage>
        <taxon>Bacteria</taxon>
        <taxon>Bacillati</taxon>
        <taxon>Bacillota</taxon>
        <taxon>Bacilli</taxon>
        <taxon>Bacillales</taxon>
        <taxon>Staphylococcaceae</taxon>
        <taxon>Staphylococcus</taxon>
    </lineage>
</organism>
<sequence>MRYSNSEKAMAKAEELMPGGVNSPVRAFKSVDTPAIFMDHGEGSRIYDIDGNEYIDYVLSWGPLILGHKNKQVIEKIHEAVDKGTSFGASTLQENKLAELVIERVPSIEKVRMVSSGTEATLDTLRLARGYTGRNKIVKFVGCYHGHSDSLLIKAGSGVATLGLPDSPGVPEGIAKNTITVPYNDLDAIKVAFEEFGDDIAGVIVEPVAGNMGVVPPVEGFLQGLRDITTAYGSLLIFDEVMTGFRVGYNCAQGYFDVTPDLTCLGKVIGGGLPVGAFGGKKEIMDQIAPTGDIYQAGTLSGNPLAMTSGYETLSQLTPETYDYFNKLGDLLEQGLKDVFAKHNVPITVNRAGSMIGYFLNAGPVTNFEQANNSDLEMFSQMYREMAKEGVFLPPSQFEGTFLSTSHTEEDINKTIQAFDTALSRIV</sequence>
<dbReference type="EC" id="5.4.3.8" evidence="1"/>
<dbReference type="EMBL" id="AP008934">
    <property type="protein sequence ID" value="BAE18242.1"/>
    <property type="molecule type" value="Genomic_DNA"/>
</dbReference>
<dbReference type="SMR" id="Q49Y99"/>
<dbReference type="KEGG" id="ssp:SSP1097"/>
<dbReference type="eggNOG" id="COG0001">
    <property type="taxonomic scope" value="Bacteria"/>
</dbReference>
<dbReference type="HOGENOM" id="CLU_016922_1_5_9"/>
<dbReference type="OrthoDB" id="9807885at2"/>
<dbReference type="UniPathway" id="UPA00251">
    <property type="reaction ID" value="UER00317"/>
</dbReference>
<dbReference type="Proteomes" id="UP000006371">
    <property type="component" value="Chromosome"/>
</dbReference>
<dbReference type="GO" id="GO:0005737">
    <property type="term" value="C:cytoplasm"/>
    <property type="evidence" value="ECO:0007669"/>
    <property type="project" value="UniProtKB-SubCell"/>
</dbReference>
<dbReference type="GO" id="GO:0042286">
    <property type="term" value="F:glutamate-1-semialdehyde 2,1-aminomutase activity"/>
    <property type="evidence" value="ECO:0007669"/>
    <property type="project" value="UniProtKB-UniRule"/>
</dbReference>
<dbReference type="GO" id="GO:0030170">
    <property type="term" value="F:pyridoxal phosphate binding"/>
    <property type="evidence" value="ECO:0007669"/>
    <property type="project" value="InterPro"/>
</dbReference>
<dbReference type="GO" id="GO:0008483">
    <property type="term" value="F:transaminase activity"/>
    <property type="evidence" value="ECO:0007669"/>
    <property type="project" value="InterPro"/>
</dbReference>
<dbReference type="GO" id="GO:0006782">
    <property type="term" value="P:protoporphyrinogen IX biosynthetic process"/>
    <property type="evidence" value="ECO:0007669"/>
    <property type="project" value="UniProtKB-UniRule"/>
</dbReference>
<dbReference type="CDD" id="cd00610">
    <property type="entry name" value="OAT_like"/>
    <property type="match status" value="1"/>
</dbReference>
<dbReference type="FunFam" id="3.40.640.10:FF:000021">
    <property type="entry name" value="Glutamate-1-semialdehyde 2,1-aminomutase"/>
    <property type="match status" value="1"/>
</dbReference>
<dbReference type="Gene3D" id="3.90.1150.10">
    <property type="entry name" value="Aspartate Aminotransferase, domain 1"/>
    <property type="match status" value="1"/>
</dbReference>
<dbReference type="Gene3D" id="3.40.640.10">
    <property type="entry name" value="Type I PLP-dependent aspartate aminotransferase-like (Major domain)"/>
    <property type="match status" value="1"/>
</dbReference>
<dbReference type="HAMAP" id="MF_00375">
    <property type="entry name" value="HemL_aminotrans_3"/>
    <property type="match status" value="1"/>
</dbReference>
<dbReference type="InterPro" id="IPR004639">
    <property type="entry name" value="4pyrrol_synth_GluAld_NH2Trfase"/>
</dbReference>
<dbReference type="InterPro" id="IPR005814">
    <property type="entry name" value="Aminotrans_3"/>
</dbReference>
<dbReference type="InterPro" id="IPR049704">
    <property type="entry name" value="Aminotrans_3_PPA_site"/>
</dbReference>
<dbReference type="InterPro" id="IPR015424">
    <property type="entry name" value="PyrdxlP-dep_Trfase"/>
</dbReference>
<dbReference type="InterPro" id="IPR015421">
    <property type="entry name" value="PyrdxlP-dep_Trfase_major"/>
</dbReference>
<dbReference type="InterPro" id="IPR015422">
    <property type="entry name" value="PyrdxlP-dep_Trfase_small"/>
</dbReference>
<dbReference type="NCBIfam" id="TIGR00713">
    <property type="entry name" value="hemL"/>
    <property type="match status" value="1"/>
</dbReference>
<dbReference type="NCBIfam" id="NF000818">
    <property type="entry name" value="PRK00062.1"/>
    <property type="match status" value="1"/>
</dbReference>
<dbReference type="PANTHER" id="PTHR43713">
    <property type="entry name" value="GLUTAMATE-1-SEMIALDEHYDE 2,1-AMINOMUTASE"/>
    <property type="match status" value="1"/>
</dbReference>
<dbReference type="PANTHER" id="PTHR43713:SF3">
    <property type="entry name" value="GLUTAMATE-1-SEMIALDEHYDE 2,1-AMINOMUTASE 1, CHLOROPLASTIC-RELATED"/>
    <property type="match status" value="1"/>
</dbReference>
<dbReference type="Pfam" id="PF00202">
    <property type="entry name" value="Aminotran_3"/>
    <property type="match status" value="1"/>
</dbReference>
<dbReference type="SUPFAM" id="SSF53383">
    <property type="entry name" value="PLP-dependent transferases"/>
    <property type="match status" value="1"/>
</dbReference>
<dbReference type="PROSITE" id="PS00600">
    <property type="entry name" value="AA_TRANSFER_CLASS_3"/>
    <property type="match status" value="1"/>
</dbReference>
<proteinExistence type="inferred from homology"/>
<feature type="chain" id="PRO_0000243625" description="Glutamate-1-semialdehyde 2,1-aminomutase 2">
    <location>
        <begin position="1"/>
        <end position="427"/>
    </location>
</feature>
<feature type="modified residue" description="N6-(pyridoxal phosphate)lysine" evidence="1">
    <location>
        <position position="267"/>
    </location>
</feature>
<gene>
    <name evidence="1" type="primary">hemL2</name>
    <name type="ordered locus">SSP1097</name>
</gene>
<evidence type="ECO:0000255" key="1">
    <source>
        <dbReference type="HAMAP-Rule" id="MF_00375"/>
    </source>
</evidence>
<protein>
    <recommendedName>
        <fullName evidence="1">Glutamate-1-semialdehyde 2,1-aminomutase 2</fullName>
        <shortName evidence="1">GSA 2</shortName>
        <ecNumber evidence="1">5.4.3.8</ecNumber>
    </recommendedName>
    <alternativeName>
        <fullName evidence="1">Glutamate-1-semialdehyde aminotransferase 2</fullName>
        <shortName evidence="1">GSA-AT 2</shortName>
    </alternativeName>
</protein>
<name>GSA2_STAS1</name>